<proteinExistence type="evidence at protein level"/>
<evidence type="ECO:0000305" key="1"/>
<accession>Q6M0B4</accession>
<name>WECBH_METMP</name>
<comment type="similarity">
    <text evidence="1">Belongs to the UDP-N-acetylglucosamine 2-epimerase family.</text>
</comment>
<comment type="caution">
    <text evidence="1">Despite its similarity with the UDP-N-acetylglucosamine 2-epimerase enzymes, it does not display UDP-GlcNAc 2-epimerase activity.</text>
</comment>
<protein>
    <recommendedName>
        <fullName>UDP-N-acetylglucosamine 2-epimerase homolog</fullName>
        <ecNumber>5.1.-.-</ecNumber>
    </recommendedName>
</protein>
<reference key="1">
    <citation type="journal article" date="2004" name="J. Bacteriol.">
        <title>Complete genome sequence of the genetically tractable hydrogenotrophic methanogen Methanococcus maripaludis.</title>
        <authorList>
            <person name="Hendrickson E.L."/>
            <person name="Kaul R."/>
            <person name="Zhou Y."/>
            <person name="Bovee D."/>
            <person name="Chapman P."/>
            <person name="Chung J."/>
            <person name="Conway de Macario E."/>
            <person name="Dodsworth J.A."/>
            <person name="Gillett W."/>
            <person name="Graham D.E."/>
            <person name="Hackett M."/>
            <person name="Haydock A.K."/>
            <person name="Kang A."/>
            <person name="Land M.L."/>
            <person name="Levy R."/>
            <person name="Lie T.J."/>
            <person name="Major T.A."/>
            <person name="Moore B.C."/>
            <person name="Porat I."/>
            <person name="Palmeiri A."/>
            <person name="Rouse G."/>
            <person name="Saenphimmachak C."/>
            <person name="Soell D."/>
            <person name="Van Dien S."/>
            <person name="Wang T."/>
            <person name="Whitman W.B."/>
            <person name="Xia Q."/>
            <person name="Zhang Y."/>
            <person name="Larimer F.W."/>
            <person name="Olson M.V."/>
            <person name="Leigh J.A."/>
        </authorList>
    </citation>
    <scope>NUCLEOTIDE SEQUENCE [LARGE SCALE GENOMIC DNA]</scope>
    <source>
        <strain>DSM 14266 / JCM 13030 / NBRC 101832 / S2 / LL</strain>
    </source>
</reference>
<reference key="2">
    <citation type="journal article" date="2008" name="J. Bacteriol.">
        <title>Acetamido sugar biosynthesis in the Euryarchaea.</title>
        <authorList>
            <person name="Namboori S.C."/>
            <person name="Graham D.E."/>
        </authorList>
    </citation>
    <scope>LACK OF FUNCTION AS A UDP-GLCNAC EPIMERASE</scope>
    <source>
        <strain>900</strain>
    </source>
</reference>
<dbReference type="EC" id="5.1.-.-"/>
<dbReference type="EMBL" id="BX950229">
    <property type="protein sequence ID" value="CAF29913.1"/>
    <property type="molecule type" value="Genomic_DNA"/>
</dbReference>
<dbReference type="RefSeq" id="WP_011170301.1">
    <property type="nucleotide sequence ID" value="NC_005791.1"/>
</dbReference>
<dbReference type="SMR" id="Q6M0B4"/>
<dbReference type="STRING" id="267377.MMP0357"/>
<dbReference type="EnsemblBacteria" id="CAF29913">
    <property type="protein sequence ID" value="CAF29913"/>
    <property type="gene ID" value="MMP0357"/>
</dbReference>
<dbReference type="GeneID" id="2761372"/>
<dbReference type="KEGG" id="mmp:MMP0357"/>
<dbReference type="PATRIC" id="fig|267377.15.peg.360"/>
<dbReference type="eggNOG" id="arCOG01392">
    <property type="taxonomic scope" value="Archaea"/>
</dbReference>
<dbReference type="HOGENOM" id="CLU_041674_0_1_2"/>
<dbReference type="OrthoDB" id="7018at2157"/>
<dbReference type="Proteomes" id="UP000000590">
    <property type="component" value="Chromosome"/>
</dbReference>
<dbReference type="GO" id="GO:0016853">
    <property type="term" value="F:isomerase activity"/>
    <property type="evidence" value="ECO:0007669"/>
    <property type="project" value="UniProtKB-KW"/>
</dbReference>
<dbReference type="CDD" id="cd03786">
    <property type="entry name" value="GTB_UDP-GlcNAc_2-Epimerase"/>
    <property type="match status" value="1"/>
</dbReference>
<dbReference type="Gene3D" id="3.40.50.2000">
    <property type="entry name" value="Glycogen Phosphorylase B"/>
    <property type="match status" value="2"/>
</dbReference>
<dbReference type="InterPro" id="IPR003331">
    <property type="entry name" value="UDP_GlcNAc_Epimerase_2_dom"/>
</dbReference>
<dbReference type="InterPro" id="IPR029767">
    <property type="entry name" value="WecB-like"/>
</dbReference>
<dbReference type="NCBIfam" id="TIGR00236">
    <property type="entry name" value="wecB"/>
    <property type="match status" value="1"/>
</dbReference>
<dbReference type="PANTHER" id="PTHR43174">
    <property type="entry name" value="UDP-N-ACETYLGLUCOSAMINE 2-EPIMERASE"/>
    <property type="match status" value="1"/>
</dbReference>
<dbReference type="PANTHER" id="PTHR43174:SF1">
    <property type="entry name" value="UDP-N-ACETYLGLUCOSAMINE 2-EPIMERASE"/>
    <property type="match status" value="1"/>
</dbReference>
<dbReference type="Pfam" id="PF02350">
    <property type="entry name" value="Epimerase_2"/>
    <property type="match status" value="1"/>
</dbReference>
<dbReference type="SUPFAM" id="SSF53756">
    <property type="entry name" value="UDP-Glycosyltransferase/glycogen phosphorylase"/>
    <property type="match status" value="1"/>
</dbReference>
<organism>
    <name type="scientific">Methanococcus maripaludis (strain DSM 14266 / JCM 13030 / NBRC 101832 / S2 / LL)</name>
    <dbReference type="NCBI Taxonomy" id="267377"/>
    <lineage>
        <taxon>Archaea</taxon>
        <taxon>Methanobacteriati</taxon>
        <taxon>Methanobacteriota</taxon>
        <taxon>Methanomada group</taxon>
        <taxon>Methanococci</taxon>
        <taxon>Methanococcales</taxon>
        <taxon>Methanococcaceae</taxon>
        <taxon>Methanococcus</taxon>
    </lineage>
</organism>
<keyword id="KW-0413">Isomerase</keyword>
<keyword id="KW-1185">Reference proteome</keyword>
<feature type="chain" id="PRO_0000337834" description="UDP-N-acetylglucosamine 2-epimerase homolog">
    <location>
        <begin position="1"/>
        <end position="357"/>
    </location>
</feature>
<sequence length="357" mass="40851">MKIVTIVGARPQFIKLAPVSKEIRRHFEEIIIHTGQHYDFEMDKIFFDELEIPTPNYNLNIGSGSHGFQTGEMLKKIEEILLKEKPDLVLVYGDTNSTIAGALAGSKLNIKIAHVEAGLRSFDRKMPEEINRVLTDHISNILFTPTETADINLKNEGINSGIFNVGDVMYDSLLNALKLIEKKNFKILDELNISKKKYILATVHRAENTDIKENLENIINAFIESNEKIIFPVHPRTRKYLEKYRLFEKIKNYDNLKLISPVGYLEMIYLENNAKKILTDSGGVQKEAYFLKVPCVTLRNNTEWVETVLDGWNILVGSNKEKILENISKFNPASETYNYRFGEGNSSVKIVEVLRNL</sequence>
<gene>
    <name type="ordered locus">MMP0357</name>
</gene>